<dbReference type="EMBL" id="AY605289">
    <property type="protein sequence ID" value="AAT58046.1"/>
    <property type="molecule type" value="Genomic_DNA"/>
</dbReference>
<dbReference type="EMBL" id="AY530202">
    <property type="protein sequence ID" value="AAS98173.1"/>
    <property type="molecule type" value="mRNA"/>
</dbReference>
<dbReference type="RefSeq" id="NP_001098260.1">
    <property type="nucleotide sequence ID" value="NM_001104790.1"/>
</dbReference>
<dbReference type="SMR" id="Q6E211"/>
<dbReference type="STRING" id="8090.ENSORLP00000016881"/>
<dbReference type="Ensembl" id="ENSORLT00020016330.1">
    <property type="protein sequence ID" value="ENSORLP00020009836.1"/>
    <property type="gene ID" value="ENSORLG00020010734.1"/>
</dbReference>
<dbReference type="GeneID" id="100049402"/>
<dbReference type="KEGG" id="ola:100049402"/>
<dbReference type="CTD" id="572522"/>
<dbReference type="eggNOG" id="ENOG502R5GJ">
    <property type="taxonomic scope" value="Eukaryota"/>
</dbReference>
<dbReference type="InParanoid" id="Q6E211"/>
<dbReference type="OrthoDB" id="9945472at2759"/>
<dbReference type="Proteomes" id="UP000001038">
    <property type="component" value="Unplaced"/>
</dbReference>
<dbReference type="Proteomes" id="UP000265180">
    <property type="component" value="Chromosome 13"/>
</dbReference>
<dbReference type="Proteomes" id="UP000265200">
    <property type="component" value="Unplaced"/>
</dbReference>
<dbReference type="GO" id="GO:0005615">
    <property type="term" value="C:extracellular space"/>
    <property type="evidence" value="ECO:0000318"/>
    <property type="project" value="GO_Central"/>
</dbReference>
<dbReference type="GO" id="GO:0070186">
    <property type="term" value="F:growth hormone activity"/>
    <property type="evidence" value="ECO:0000318"/>
    <property type="project" value="GO_Central"/>
</dbReference>
<dbReference type="GO" id="GO:0005131">
    <property type="term" value="F:growth hormone receptor binding"/>
    <property type="evidence" value="ECO:0000318"/>
    <property type="project" value="GO_Central"/>
</dbReference>
<dbReference type="GO" id="GO:0048513">
    <property type="term" value="P:animal organ development"/>
    <property type="evidence" value="ECO:0000318"/>
    <property type="project" value="GO_Central"/>
</dbReference>
<dbReference type="GO" id="GO:0060396">
    <property type="term" value="P:growth hormone receptor signaling pathway"/>
    <property type="evidence" value="ECO:0000318"/>
    <property type="project" value="GO_Central"/>
</dbReference>
<dbReference type="GO" id="GO:0046427">
    <property type="term" value="P:positive regulation of receptor signaling pathway via JAK-STAT"/>
    <property type="evidence" value="ECO:0000318"/>
    <property type="project" value="GO_Central"/>
</dbReference>
<dbReference type="GO" id="GO:0031667">
    <property type="term" value="P:response to nutrient levels"/>
    <property type="evidence" value="ECO:0000318"/>
    <property type="project" value="GO_Central"/>
</dbReference>
<dbReference type="FunFam" id="1.20.1250.10:FF:000042">
    <property type="entry name" value="Somatolactin alpha"/>
    <property type="match status" value="1"/>
</dbReference>
<dbReference type="Gene3D" id="1.20.1250.10">
    <property type="match status" value="1"/>
</dbReference>
<dbReference type="InterPro" id="IPR009079">
    <property type="entry name" value="4_helix_cytokine-like_core"/>
</dbReference>
<dbReference type="InterPro" id="IPR001400">
    <property type="entry name" value="Somatotropin/Prolactin"/>
</dbReference>
<dbReference type="InterPro" id="IPR018116">
    <property type="entry name" value="Somatotropin_CS"/>
</dbReference>
<dbReference type="PANTHER" id="PTHR11417:SF3">
    <property type="entry name" value="SOMATOLACTIN ALPHA ISOFORM X1-RELATED"/>
    <property type="match status" value="1"/>
</dbReference>
<dbReference type="PANTHER" id="PTHR11417">
    <property type="entry name" value="SOMATOTROPIN,PROLACTIN"/>
    <property type="match status" value="1"/>
</dbReference>
<dbReference type="Pfam" id="PF00103">
    <property type="entry name" value="Hormone_1"/>
    <property type="match status" value="1"/>
</dbReference>
<dbReference type="PRINTS" id="PR00836">
    <property type="entry name" value="SOMATOTROPIN"/>
</dbReference>
<dbReference type="SUPFAM" id="SSF47266">
    <property type="entry name" value="4-helical cytokines"/>
    <property type="match status" value="1"/>
</dbReference>
<dbReference type="PROSITE" id="PS00266">
    <property type="entry name" value="SOMATOTROPIN_1"/>
    <property type="match status" value="1"/>
</dbReference>
<dbReference type="PROSITE" id="PS00338">
    <property type="entry name" value="SOMATOTROPIN_2"/>
    <property type="match status" value="1"/>
</dbReference>
<name>SOML_ORYLA</name>
<accession>Q6E211</accession>
<comment type="function">
    <text evidence="3">Selectively regulates proliferation and morphogenesis of neural-crest derived pigment cells.</text>
</comment>
<comment type="subcellular location">
    <subcellularLocation>
        <location>Secreted</location>
    </subcellularLocation>
</comment>
<comment type="similarity">
    <text evidence="4">Belongs to the somatotropin/prolactin family.</text>
</comment>
<keyword id="KW-1015">Disulfide bond</keyword>
<keyword id="KW-0325">Glycoprotein</keyword>
<keyword id="KW-0372">Hormone</keyword>
<keyword id="KW-1185">Reference proteome</keyword>
<keyword id="KW-0964">Secreted</keyword>
<keyword id="KW-0732">Signal</keyword>
<organism>
    <name type="scientific">Oryzias latipes</name>
    <name type="common">Japanese rice fish</name>
    <name type="synonym">Japanese killifish</name>
    <dbReference type="NCBI Taxonomy" id="8090"/>
    <lineage>
        <taxon>Eukaryota</taxon>
        <taxon>Metazoa</taxon>
        <taxon>Chordata</taxon>
        <taxon>Craniata</taxon>
        <taxon>Vertebrata</taxon>
        <taxon>Euteleostomi</taxon>
        <taxon>Actinopterygii</taxon>
        <taxon>Neopterygii</taxon>
        <taxon>Teleostei</taxon>
        <taxon>Neoteleostei</taxon>
        <taxon>Acanthomorphata</taxon>
        <taxon>Ovalentaria</taxon>
        <taxon>Atherinomorphae</taxon>
        <taxon>Beloniformes</taxon>
        <taxon>Adrianichthyidae</taxon>
        <taxon>Oryziinae</taxon>
        <taxon>Oryzias</taxon>
    </lineage>
</organism>
<proteinExistence type="evidence at transcript level"/>
<protein>
    <recommendedName>
        <fullName>Somatolactin</fullName>
        <shortName>SL</shortName>
    </recommendedName>
</protein>
<sequence length="230" mass="26656">MHTKVLQQGLWALLLWPHLFTVSVPLDCRDDQASLARCPSISQEKLLDRVIHHAELIYRVSEESCSLFEEMFIPLPLRLQSNQGGYACITKALPIPSSKSEIQQLSDKWLLHSVLMLVQSWIEPLVYLQMTLDRYDHAPDMLLNKTKWVSEKLISLEQGVVVLIKKMLDEGAMTTTYSEQGAFQYDVQLEMLEYVMRDYTLLTCLKKDAHKMETFLKLLKCRQTDKYNCA</sequence>
<reference key="1">
    <citation type="journal article" date="2004" name="Proc. Natl. Acad. Sci. U.S.A.">
        <title>Somatolactin selectively regulates proliferation and morphogenesis of neural-crest derived pigment cells in medaka.</title>
        <authorList>
            <person name="Fukamachi S."/>
            <person name="Sugimoto M."/>
            <person name="Mitani H."/>
            <person name="Shima A."/>
        </authorList>
    </citation>
    <scope>NUCLEOTIDE SEQUENCE [GENOMIC DNA]</scope>
    <scope>FUNCTION</scope>
    <source>
        <strain>HNI</strain>
    </source>
</reference>
<feature type="signal peptide" evidence="2">
    <location>
        <begin position="1"/>
        <end position="25"/>
    </location>
</feature>
<feature type="chain" id="PRO_0000042586" description="Somatolactin">
    <location>
        <begin position="26"/>
        <end position="230"/>
    </location>
</feature>
<feature type="glycosylation site" description="N-linked (GlcNAc...) asparagine" evidence="2">
    <location>
        <position position="144"/>
    </location>
</feature>
<feature type="disulfide bond" evidence="1">
    <location>
        <begin position="28"/>
        <end position="38"/>
    </location>
</feature>
<feature type="disulfide bond" evidence="1">
    <location>
        <begin position="88"/>
        <end position="204"/>
    </location>
</feature>
<feature type="disulfide bond" evidence="1">
    <location>
        <begin position="221"/>
        <end position="229"/>
    </location>
</feature>
<evidence type="ECO:0000250" key="1"/>
<evidence type="ECO:0000255" key="2"/>
<evidence type="ECO:0000269" key="3">
    <source>
    </source>
</evidence>
<evidence type="ECO:0000305" key="4"/>